<accession>D9PXZ6</accession>
<reference key="1">
    <citation type="journal article" date="2010" name="J. Bacteriol.">
        <title>Complete genome sequence of Methanothermobacter marburgensis, a methanoarchaeon model organism.</title>
        <authorList>
            <person name="Liesegang H."/>
            <person name="Kaster A.K."/>
            <person name="Wiezer A."/>
            <person name="Goenrich M."/>
            <person name="Wollherr A."/>
            <person name="Seedorf H."/>
            <person name="Gottschalk G."/>
            <person name="Thauer R.K."/>
        </authorList>
    </citation>
    <scope>NUCLEOTIDE SEQUENCE [LARGE SCALE GENOMIC DNA]</scope>
    <source>
        <strain>ATCC BAA-927 / DSM 2133 / JCM 14651 / NBRC 100331 / OCM 82 / Marburg</strain>
    </source>
</reference>
<reference key="2">
    <citation type="journal article" date="1990" name="Eur. J. Biochem.">
        <title>Two genetically distinct methyl-coenzyme M reductases in Methanobacterium thermoautotrophicum strain Marburg and delta H.</title>
        <authorList>
            <person name="Rospert S."/>
            <person name="Linder D."/>
            <person name="Ellermann J."/>
            <person name="Thauer R.K."/>
        </authorList>
    </citation>
    <scope>PROTEIN SEQUENCE OF 2-15</scope>
    <scope>FUNCTION</scope>
    <scope>CATALYTIC ACTIVITY</scope>
    <scope>SUBUNIT</scope>
    <scope>DEVELOPMENTAL STAGE</scope>
    <source>
        <strain>ATCC BAA-927 / DSM 2133 / JCM 14651 / NBRC 100331 / OCM 82 / Marburg</strain>
    </source>
</reference>
<reference evidence="8" key="3">
    <citation type="journal article" date="2016" name="Angew. Chem. Int. Ed. Engl.">
        <title>Didehydroaspartate Modification in Methyl-CoenzymeM Reductase Catalyzing Methane Formation.</title>
        <authorList>
            <person name="Wagner T."/>
            <person name="Kahnt J."/>
            <person name="Ermler U."/>
            <person name="Shima S."/>
        </authorList>
    </citation>
    <scope>X-RAY CRYSTALLOGRAPHY (2.15 ANGSTROMS) IN COMPLEX WITH COENZYME F430; COENZYME B; COENZYME M AND MCR SUBUNITS ALPHA AND GAMMA</scope>
    <scope>COFACTOR</scope>
    <scope>SUBUNIT</scope>
    <source>
        <strain>ATCC BAA-927 / DSM 2133 / JCM 14651 / NBRC 100331 / OCM 82 / Marburg</strain>
    </source>
</reference>
<name>MCRY_METTM</name>
<sequence length="443" mass="47000">MPMYEDRIDLYGADGKLLEEDVPLEAISPLKNPTIANLVSDVKRSVAVNLAGIEGSLRKAALGGKSNFIPGREVELPIVENAEAIAEKVKKLVQTSEDDDTNIRLINNGQQILVQVPTTRMGVAADYTVSALVTGAAVVQAIIDEFDVDMFDANAVKTAVMGRYPQTVDFTGANLSTLLGPPVLLEGLGYGLRNIMANHVVAITRKNTLNASALSSILEQTAMFETGDAVGAFERMHLLGLAYQGLNANNLLFDLVKENGKGTVGTVIASLVERAVEDGVVKVAREMNSGYKVYEPADWALWNAYAATGLLAATIVNVGAARAAQGVASTVLYYNDILEYETGLPGVDFGRAMGTAVGFSFFSHSIYGGGGPGIFHGNHVVTRHSKGFALPCVAAAMCLDAGTQMFSVEKTSGLIGSVYSEIDYFREPIVNVAKGAAEVKDQL</sequence>
<proteinExistence type="evidence at protein level"/>
<keyword id="KW-0002">3D-structure</keyword>
<keyword id="KW-0903">Direct protein sequencing</keyword>
<keyword id="KW-0484">Methanogenesis</keyword>
<keyword id="KW-0808">Transferase</keyword>
<gene>
    <name evidence="7" type="primary">mrtB</name>
    <name evidence="7" type="ordered locus">MTBMA_c15150</name>
</gene>
<organism>
    <name type="scientific">Methanothermobacter marburgensis (strain ATCC BAA-927 / DSM 2133 / JCM 14651 / NBRC 100331 / OCM 82 / Marburg)</name>
    <name type="common">Methanobacterium thermoautotrophicum</name>
    <dbReference type="NCBI Taxonomy" id="79929"/>
    <lineage>
        <taxon>Archaea</taxon>
        <taxon>Methanobacteriati</taxon>
        <taxon>Methanobacteriota</taxon>
        <taxon>Methanomada group</taxon>
        <taxon>Methanobacteria</taxon>
        <taxon>Methanobacteriales</taxon>
        <taxon>Methanobacteriaceae</taxon>
        <taxon>Methanothermobacter</taxon>
    </lineage>
</organism>
<evidence type="ECO:0000255" key="1">
    <source>
        <dbReference type="PIRNR" id="PIRNR000263"/>
    </source>
</evidence>
<evidence type="ECO:0000269" key="2">
    <source>
    </source>
</evidence>
<evidence type="ECO:0000269" key="3">
    <source>
    </source>
</evidence>
<evidence type="ECO:0000303" key="4">
    <source>
    </source>
</evidence>
<evidence type="ECO:0000305" key="5"/>
<evidence type="ECO:0000305" key="6">
    <source>
    </source>
</evidence>
<evidence type="ECO:0000312" key="7">
    <source>
        <dbReference type="EMBL" id="ADL59094.1"/>
    </source>
</evidence>
<evidence type="ECO:0007744" key="8">
    <source>
        <dbReference type="PDB" id="5A8R"/>
    </source>
</evidence>
<evidence type="ECO:0007829" key="9">
    <source>
        <dbReference type="PDB" id="5A8R"/>
    </source>
</evidence>
<feature type="initiator methionine" description="Removed" evidence="2">
    <location>
        <position position="1"/>
    </location>
</feature>
<feature type="chain" id="PRO_0000446663" description="Methyl-coenzyme M reductase II subunit beta">
    <location>
        <begin position="2"/>
        <end position="443"/>
    </location>
</feature>
<feature type="binding site" evidence="3 8">
    <location>
        <position position="367"/>
    </location>
    <ligand>
        <name>coenzyme M</name>
        <dbReference type="ChEBI" id="CHEBI:58319"/>
    </ligand>
</feature>
<feature type="binding site" evidence="3 8">
    <location>
        <position position="369"/>
    </location>
    <ligand>
        <name>coenzyme B</name>
        <dbReference type="ChEBI" id="CHEBI:58596"/>
    </ligand>
</feature>
<feature type="strand" evidence="9">
    <location>
        <begin position="7"/>
        <end position="11"/>
    </location>
</feature>
<feature type="strand" evidence="9">
    <location>
        <begin position="17"/>
        <end position="23"/>
    </location>
</feature>
<feature type="helix" evidence="9">
    <location>
        <begin position="24"/>
        <end position="27"/>
    </location>
</feature>
<feature type="turn" evidence="9">
    <location>
        <begin position="29"/>
        <end position="31"/>
    </location>
</feature>
<feature type="helix" evidence="9">
    <location>
        <begin position="33"/>
        <end position="44"/>
    </location>
</feature>
<feature type="strand" evidence="9">
    <location>
        <begin position="45"/>
        <end position="48"/>
    </location>
</feature>
<feature type="helix" evidence="9">
    <location>
        <begin position="50"/>
        <end position="59"/>
    </location>
</feature>
<feature type="helix" evidence="9">
    <location>
        <begin position="79"/>
        <end position="81"/>
    </location>
</feature>
<feature type="helix" evidence="9">
    <location>
        <begin position="82"/>
        <end position="93"/>
    </location>
</feature>
<feature type="strand" evidence="9">
    <location>
        <begin position="102"/>
        <end position="106"/>
    </location>
</feature>
<feature type="helix" evidence="9">
    <location>
        <begin position="107"/>
        <end position="109"/>
    </location>
</feature>
<feature type="strand" evidence="9">
    <location>
        <begin position="111"/>
        <end position="115"/>
    </location>
</feature>
<feature type="helix" evidence="9">
    <location>
        <begin position="118"/>
        <end position="122"/>
    </location>
</feature>
<feature type="strand" evidence="9">
    <location>
        <begin position="124"/>
        <end position="126"/>
    </location>
</feature>
<feature type="helix" evidence="9">
    <location>
        <begin position="129"/>
        <end position="146"/>
    </location>
</feature>
<feature type="helix" evidence="9">
    <location>
        <begin position="150"/>
        <end position="161"/>
    </location>
</feature>
<feature type="turn" evidence="9">
    <location>
        <begin position="162"/>
        <end position="166"/>
    </location>
</feature>
<feature type="strand" evidence="9">
    <location>
        <begin position="167"/>
        <end position="169"/>
    </location>
</feature>
<feature type="strand" evidence="9">
    <location>
        <begin position="174"/>
        <end position="176"/>
    </location>
</feature>
<feature type="helix" evidence="9">
    <location>
        <begin position="182"/>
        <end position="184"/>
    </location>
</feature>
<feature type="helix" evidence="9">
    <location>
        <begin position="191"/>
        <end position="193"/>
    </location>
</feature>
<feature type="helix" evidence="9">
    <location>
        <begin position="197"/>
        <end position="203"/>
    </location>
</feature>
<feature type="turn" evidence="9">
    <location>
        <begin position="204"/>
        <end position="206"/>
    </location>
</feature>
<feature type="helix" evidence="9">
    <location>
        <begin position="208"/>
        <end position="225"/>
    </location>
</feature>
<feature type="turn" evidence="9">
    <location>
        <begin position="226"/>
        <end position="229"/>
    </location>
</feature>
<feature type="helix" evidence="9">
    <location>
        <begin position="231"/>
        <end position="233"/>
    </location>
</feature>
<feature type="helix" evidence="9">
    <location>
        <begin position="234"/>
        <end position="246"/>
    </location>
</feature>
<feature type="helix" evidence="9">
    <location>
        <begin position="251"/>
        <end position="257"/>
    </location>
</feature>
<feature type="turn" evidence="9">
    <location>
        <begin position="258"/>
        <end position="261"/>
    </location>
</feature>
<feature type="helix" evidence="9">
    <location>
        <begin position="264"/>
        <end position="277"/>
    </location>
</feature>
<feature type="strand" evidence="9">
    <location>
        <begin position="280"/>
        <end position="286"/>
    </location>
</feature>
<feature type="strand" evidence="9">
    <location>
        <begin position="292"/>
        <end position="298"/>
    </location>
</feature>
<feature type="helix" evidence="9">
    <location>
        <begin position="299"/>
        <end position="321"/>
    </location>
</feature>
<feature type="helix" evidence="9">
    <location>
        <begin position="324"/>
        <end position="326"/>
    </location>
</feature>
<feature type="helix" evidence="9">
    <location>
        <begin position="327"/>
        <end position="342"/>
    </location>
</feature>
<feature type="helix" evidence="9">
    <location>
        <begin position="347"/>
        <end position="350"/>
    </location>
</feature>
<feature type="helix" evidence="9">
    <location>
        <begin position="351"/>
        <end position="361"/>
    </location>
</feature>
<feature type="strand" evidence="9">
    <location>
        <begin position="364"/>
        <end position="368"/>
    </location>
</feature>
<feature type="helix" evidence="9">
    <location>
        <begin position="372"/>
        <end position="374"/>
    </location>
</feature>
<feature type="turn" evidence="9">
    <location>
        <begin position="380"/>
        <end position="382"/>
    </location>
</feature>
<feature type="strand" evidence="9">
    <location>
        <begin position="384"/>
        <end position="389"/>
    </location>
</feature>
<feature type="helix" evidence="9">
    <location>
        <begin position="390"/>
        <end position="399"/>
    </location>
</feature>
<feature type="helix" evidence="9">
    <location>
        <begin position="408"/>
        <end position="419"/>
    </location>
</feature>
<feature type="helix" evidence="9">
    <location>
        <begin position="423"/>
        <end position="426"/>
    </location>
</feature>
<feature type="helix" evidence="9">
    <location>
        <begin position="428"/>
        <end position="439"/>
    </location>
</feature>
<feature type="helix" evidence="9">
    <location>
        <begin position="440"/>
        <end position="442"/>
    </location>
</feature>
<protein>
    <recommendedName>
        <fullName evidence="4">Methyl-coenzyme M reductase II subunit beta</fullName>
        <shortName evidence="4">MCR II beta</shortName>
        <ecNumber evidence="2">2.8.4.1</ecNumber>
    </recommendedName>
    <alternativeName>
        <fullName evidence="1">Coenzyme-B sulfoethylthiotransferase beta</fullName>
    </alternativeName>
</protein>
<comment type="function">
    <text evidence="2">Component of the methyl-coenzyme M reductase (MCR) I that catalyzes the reductive cleavage of methyl-coenzyme M (CoM-S-CH3 or 2-(methylthio)ethanesulfonate) using coenzyme B (CoB or 7-mercaptoheptanoylthreonine phosphate) as reductant which results in the production of methane and the mixed heterodisulfide of CoB and CoM (CoM-S-S-CoB). This is the final step in methanogenesis.</text>
</comment>
<comment type="catalytic activity">
    <reaction evidence="2">
        <text>coenzyme B + methyl-coenzyme M = methane + coenzyme M-coenzyme B heterodisulfide</text>
        <dbReference type="Rhea" id="RHEA:12532"/>
        <dbReference type="ChEBI" id="CHEBI:16183"/>
        <dbReference type="ChEBI" id="CHEBI:58286"/>
        <dbReference type="ChEBI" id="CHEBI:58411"/>
        <dbReference type="ChEBI" id="CHEBI:58596"/>
        <dbReference type="EC" id="2.8.4.1"/>
    </reaction>
    <physiologicalReaction direction="left-to-right" evidence="6">
        <dbReference type="Rhea" id="RHEA:12533"/>
    </physiologicalReaction>
</comment>
<comment type="cofactor">
    <cofactor evidence="3">
        <name>coenzyme F430</name>
        <dbReference type="ChEBI" id="CHEBI:60540"/>
    </cofactor>
    <text evidence="3">Binds 2 coenzyme F430 non-covalently per MCR complex. Coenzyme F430 is a yellow nickel porphinoid.</text>
</comment>
<comment type="pathway">
    <text evidence="6">One-carbon metabolism; methyl-coenzyme M reduction; methane from methyl-coenzyme M: step 1/1.</text>
</comment>
<comment type="subunit">
    <text evidence="2 3">MCR is a hexamer of two alpha, two beta, and two gamma chains, forming a dimer of heterotrimers.</text>
</comment>
<comment type="developmental stage">
    <text evidence="2">There are two MCR complexes in this bacteria. MCR II is expressed in the early growth phase. Late growth cells contain mostly MCR I.</text>
</comment>
<comment type="similarity">
    <text evidence="5">Belongs to the methyl-coenzyme M reductase beta subunit family.</text>
</comment>
<dbReference type="EC" id="2.8.4.1" evidence="2"/>
<dbReference type="EMBL" id="CP001710">
    <property type="protein sequence ID" value="ADL59094.1"/>
    <property type="molecule type" value="Genomic_DNA"/>
</dbReference>
<dbReference type="RefSeq" id="WP_013296305.1">
    <property type="nucleotide sequence ID" value="NC_014408.1"/>
</dbReference>
<dbReference type="PDB" id="5A8R">
    <property type="method" value="X-ray"/>
    <property type="resolution" value="2.15 A"/>
    <property type="chains" value="B/E/H/K=1-443"/>
</dbReference>
<dbReference type="PDBsum" id="5A8R"/>
<dbReference type="SMR" id="D9PXZ6"/>
<dbReference type="STRING" id="79929.MTBMA_c15150"/>
<dbReference type="PaxDb" id="79929-MTBMA_c15150"/>
<dbReference type="GeneID" id="77400287"/>
<dbReference type="GeneID" id="9705224"/>
<dbReference type="KEGG" id="mmg:MTBMA_c15150"/>
<dbReference type="PATRIC" id="fig|79929.8.peg.1468"/>
<dbReference type="HOGENOM" id="CLU_617682_0_0_2"/>
<dbReference type="OrthoDB" id="52873at2157"/>
<dbReference type="UniPathway" id="UPA00646">
    <property type="reaction ID" value="UER00699"/>
</dbReference>
<dbReference type="Proteomes" id="UP000000345">
    <property type="component" value="Chromosome"/>
</dbReference>
<dbReference type="GO" id="GO:0050524">
    <property type="term" value="F:coenzyme-B sulfoethylthiotransferase activity"/>
    <property type="evidence" value="ECO:0007669"/>
    <property type="project" value="UniProtKB-EC"/>
</dbReference>
<dbReference type="GO" id="GO:0015948">
    <property type="term" value="P:methanogenesis"/>
    <property type="evidence" value="ECO:0007669"/>
    <property type="project" value="UniProtKB-KW"/>
</dbReference>
<dbReference type="Gene3D" id="3.30.70.470">
    <property type="match status" value="1"/>
</dbReference>
<dbReference type="Gene3D" id="1.20.840.10">
    <property type="entry name" value="Methyl-coenzyme M reductase, alpha/beta subunit, C-terminal"/>
    <property type="match status" value="1"/>
</dbReference>
<dbReference type="InterPro" id="IPR008924">
    <property type="entry name" value="Me_CoM_Rdtase_asu/bsu_C"/>
</dbReference>
<dbReference type="InterPro" id="IPR015823">
    <property type="entry name" value="Me_CoM_Rdtase_asu_N_sub2"/>
</dbReference>
<dbReference type="InterPro" id="IPR003179">
    <property type="entry name" value="Me_CoM_Rdtase_bsu"/>
</dbReference>
<dbReference type="InterPro" id="IPR022679">
    <property type="entry name" value="Me_CoM_Rdtase_bsu_C"/>
</dbReference>
<dbReference type="InterPro" id="IPR022680">
    <property type="entry name" value="Me_CoM_Rdtase_bsu_N"/>
</dbReference>
<dbReference type="InterPro" id="IPR009024">
    <property type="entry name" value="Me_CoM_Rdtase_Fd-like_fold"/>
</dbReference>
<dbReference type="NCBIfam" id="TIGR03257">
    <property type="entry name" value="met_CoM_red_bet"/>
    <property type="match status" value="1"/>
</dbReference>
<dbReference type="Pfam" id="PF02241">
    <property type="entry name" value="MCR_beta"/>
    <property type="match status" value="1"/>
</dbReference>
<dbReference type="Pfam" id="PF02783">
    <property type="entry name" value="MCR_beta_N"/>
    <property type="match status" value="1"/>
</dbReference>
<dbReference type="PIRSF" id="PIRSF000263">
    <property type="entry name" value="Meth_CoM_rd_beta"/>
    <property type="match status" value="1"/>
</dbReference>
<dbReference type="SUPFAM" id="SSF48081">
    <property type="entry name" value="Methyl-coenzyme M reductase alpha and beta chain C-terminal domain"/>
    <property type="match status" value="1"/>
</dbReference>
<dbReference type="SUPFAM" id="SSF55088">
    <property type="entry name" value="Methyl-coenzyme M reductase subunits"/>
    <property type="match status" value="1"/>
</dbReference>